<proteinExistence type="inferred from homology"/>
<reference key="1">
    <citation type="journal article" date="2009" name="PLoS ONE">
        <title>Genome sequence of the endosymbiont Rickettsia peacockii and comparison with virulent Rickettsia rickettsii: identification of virulence factors.</title>
        <authorList>
            <person name="Felsheim R.F."/>
            <person name="Kurtti T.J."/>
            <person name="Munderloh U.G."/>
        </authorList>
    </citation>
    <scope>NUCLEOTIDE SEQUENCE [LARGE SCALE GENOMIC DNA]</scope>
    <source>
        <strain>Rustic</strain>
    </source>
</reference>
<organism>
    <name type="scientific">Rickettsia peacockii (strain Rustic)</name>
    <dbReference type="NCBI Taxonomy" id="562019"/>
    <lineage>
        <taxon>Bacteria</taxon>
        <taxon>Pseudomonadati</taxon>
        <taxon>Pseudomonadota</taxon>
        <taxon>Alphaproteobacteria</taxon>
        <taxon>Rickettsiales</taxon>
        <taxon>Rickettsiaceae</taxon>
        <taxon>Rickettsieae</taxon>
        <taxon>Rickettsia</taxon>
        <taxon>spotted fever group</taxon>
    </lineage>
</organism>
<evidence type="ECO:0000255" key="1">
    <source>
        <dbReference type="HAMAP-Rule" id="MF_00129"/>
    </source>
</evidence>
<name>MNMG_RICPU</name>
<accession>C4K176</accession>
<gene>
    <name evidence="1" type="primary">mnmG</name>
    <name evidence="1" type="synonym">gidA</name>
    <name type="ordered locus">RPR_02505</name>
</gene>
<sequence length="622" mass="68788">MLKYDVIVIGGGHAGVEAAAASARLGVPTLLITLKPENLGEMSCNPAIGGIAKGTLVKEIDALDGLMGYVIDQAGIHYKMLNETRGPAVWGPRAQADRKLYKKAMYQILTNYPNLDILYGKVEDIEIKSSKIEAVILNNGSKILCQKIILTTGTFLSGLIHIGQKKIPAGRVDEEPSYGLSNTLKQIGFKLARLKTGTPPRIDGRTIDYSKTILQPGDKIPRPFSELTNIVNVSQINCFITTTTSETHDIIRENLDKSAMYSGQIEGIGPRYCPSIEDKIVRFSTKSEHRIFLEPEGLDDYTIYPNGISTSLPEDVQHKLIKTIPGLENVKVLRPGYAIEYDYVDPREISVTLETKKIAGLYLAGQINGTTGYEEAAGQGIIAGINAALAVKDQAPFMLTRANSYIGVMIDDLTTFGTIEPYRMFTSRSEYRLSLRADNSDLRLTELGMNIGVVSEKRKKIFTKKCEDIEKIKSLLNTLSLTTSKLAKMGIQVAQDGTYKTVLDLFKIPNFNVEQAIKIFPMLKETQNNNILQLLYIEAKYASYLTRQHADINLFQSEEAQFIPKNLDYFKIPSISLEIQEKLSSHKPTTIGVARRIPGITPAAITAIIIYLKTKYSDGSST</sequence>
<comment type="function">
    <text evidence="1">NAD-binding protein involved in the addition of a carboxymethylaminomethyl (cmnm) group at the wobble position (U34) of certain tRNAs, forming tRNA-cmnm(5)s(2)U34.</text>
</comment>
<comment type="cofactor">
    <cofactor evidence="1">
        <name>FAD</name>
        <dbReference type="ChEBI" id="CHEBI:57692"/>
    </cofactor>
</comment>
<comment type="subunit">
    <text evidence="1">Homodimer. Heterotetramer of two MnmE and two MnmG subunits.</text>
</comment>
<comment type="subcellular location">
    <subcellularLocation>
        <location evidence="1">Cytoplasm</location>
    </subcellularLocation>
</comment>
<comment type="similarity">
    <text evidence="1">Belongs to the MnmG family.</text>
</comment>
<keyword id="KW-0963">Cytoplasm</keyword>
<keyword id="KW-0274">FAD</keyword>
<keyword id="KW-0285">Flavoprotein</keyword>
<keyword id="KW-0520">NAD</keyword>
<keyword id="KW-0819">tRNA processing</keyword>
<protein>
    <recommendedName>
        <fullName evidence="1">tRNA uridine 5-carboxymethylaminomethyl modification enzyme MnmG</fullName>
    </recommendedName>
    <alternativeName>
        <fullName evidence="1">Glucose-inhibited division protein A</fullName>
    </alternativeName>
</protein>
<dbReference type="EMBL" id="CP001227">
    <property type="protein sequence ID" value="ACR47327.1"/>
    <property type="molecule type" value="Genomic_DNA"/>
</dbReference>
<dbReference type="RefSeq" id="WP_012736589.1">
    <property type="nucleotide sequence ID" value="NC_012730.1"/>
</dbReference>
<dbReference type="SMR" id="C4K176"/>
<dbReference type="KEGG" id="rpk:RPR_02505"/>
<dbReference type="HOGENOM" id="CLU_007831_2_2_5"/>
<dbReference type="Proteomes" id="UP000005015">
    <property type="component" value="Chromosome"/>
</dbReference>
<dbReference type="GO" id="GO:0005829">
    <property type="term" value="C:cytosol"/>
    <property type="evidence" value="ECO:0007669"/>
    <property type="project" value="TreeGrafter"/>
</dbReference>
<dbReference type="GO" id="GO:0050660">
    <property type="term" value="F:flavin adenine dinucleotide binding"/>
    <property type="evidence" value="ECO:0007669"/>
    <property type="project" value="UniProtKB-UniRule"/>
</dbReference>
<dbReference type="GO" id="GO:0030488">
    <property type="term" value="P:tRNA methylation"/>
    <property type="evidence" value="ECO:0007669"/>
    <property type="project" value="TreeGrafter"/>
</dbReference>
<dbReference type="GO" id="GO:0002098">
    <property type="term" value="P:tRNA wobble uridine modification"/>
    <property type="evidence" value="ECO:0007669"/>
    <property type="project" value="InterPro"/>
</dbReference>
<dbReference type="FunFam" id="3.50.50.60:FF:000082">
    <property type="entry name" value="protein MTO1 homolog, mitochondrial isoform X1"/>
    <property type="match status" value="1"/>
</dbReference>
<dbReference type="FunFam" id="1.10.150.570:FF:000001">
    <property type="entry name" value="tRNA uridine 5-carboxymethylaminomethyl modification enzyme MnmG"/>
    <property type="match status" value="1"/>
</dbReference>
<dbReference type="FunFam" id="3.50.50.60:FF:000002">
    <property type="entry name" value="tRNA uridine 5-carboxymethylaminomethyl modification enzyme MnmG"/>
    <property type="match status" value="1"/>
</dbReference>
<dbReference type="Gene3D" id="3.50.50.60">
    <property type="entry name" value="FAD/NAD(P)-binding domain"/>
    <property type="match status" value="2"/>
</dbReference>
<dbReference type="Gene3D" id="1.10.150.570">
    <property type="entry name" value="GidA associated domain, C-terminal subdomain"/>
    <property type="match status" value="1"/>
</dbReference>
<dbReference type="HAMAP" id="MF_00129">
    <property type="entry name" value="MnmG_GidA"/>
    <property type="match status" value="1"/>
</dbReference>
<dbReference type="InterPro" id="IPR036188">
    <property type="entry name" value="FAD/NAD-bd_sf"/>
</dbReference>
<dbReference type="InterPro" id="IPR049312">
    <property type="entry name" value="GIDA_C_N"/>
</dbReference>
<dbReference type="InterPro" id="IPR004416">
    <property type="entry name" value="MnmG"/>
</dbReference>
<dbReference type="InterPro" id="IPR002218">
    <property type="entry name" value="MnmG-rel"/>
</dbReference>
<dbReference type="InterPro" id="IPR020595">
    <property type="entry name" value="MnmG-rel_CS"/>
</dbReference>
<dbReference type="InterPro" id="IPR026904">
    <property type="entry name" value="MnmG_C"/>
</dbReference>
<dbReference type="InterPro" id="IPR047001">
    <property type="entry name" value="MnmG_C_subdom"/>
</dbReference>
<dbReference type="InterPro" id="IPR044920">
    <property type="entry name" value="MnmG_C_subdom_sf"/>
</dbReference>
<dbReference type="InterPro" id="IPR040131">
    <property type="entry name" value="MnmG_N"/>
</dbReference>
<dbReference type="NCBIfam" id="TIGR00136">
    <property type="entry name" value="mnmG_gidA"/>
    <property type="match status" value="1"/>
</dbReference>
<dbReference type="PANTHER" id="PTHR11806">
    <property type="entry name" value="GLUCOSE INHIBITED DIVISION PROTEIN A"/>
    <property type="match status" value="1"/>
</dbReference>
<dbReference type="PANTHER" id="PTHR11806:SF0">
    <property type="entry name" value="PROTEIN MTO1 HOMOLOG, MITOCHONDRIAL"/>
    <property type="match status" value="1"/>
</dbReference>
<dbReference type="Pfam" id="PF01134">
    <property type="entry name" value="GIDA"/>
    <property type="match status" value="1"/>
</dbReference>
<dbReference type="Pfam" id="PF21680">
    <property type="entry name" value="GIDA_C_1st"/>
    <property type="match status" value="1"/>
</dbReference>
<dbReference type="Pfam" id="PF13932">
    <property type="entry name" value="SAM_GIDA_C"/>
    <property type="match status" value="1"/>
</dbReference>
<dbReference type="PRINTS" id="PR00411">
    <property type="entry name" value="PNDRDTASEI"/>
</dbReference>
<dbReference type="SMART" id="SM01228">
    <property type="entry name" value="GIDA_assoc_3"/>
    <property type="match status" value="1"/>
</dbReference>
<dbReference type="SUPFAM" id="SSF51905">
    <property type="entry name" value="FAD/NAD(P)-binding domain"/>
    <property type="match status" value="1"/>
</dbReference>
<dbReference type="PROSITE" id="PS01280">
    <property type="entry name" value="GIDA_1"/>
    <property type="match status" value="1"/>
</dbReference>
<dbReference type="PROSITE" id="PS01281">
    <property type="entry name" value="GIDA_2"/>
    <property type="match status" value="1"/>
</dbReference>
<feature type="chain" id="PRO_1000203167" description="tRNA uridine 5-carboxymethylaminomethyl modification enzyme MnmG">
    <location>
        <begin position="1"/>
        <end position="622"/>
    </location>
</feature>
<feature type="binding site" evidence="1">
    <location>
        <begin position="10"/>
        <end position="15"/>
    </location>
    <ligand>
        <name>FAD</name>
        <dbReference type="ChEBI" id="CHEBI:57692"/>
    </ligand>
</feature>
<feature type="binding site" evidence="1">
    <location>
        <position position="122"/>
    </location>
    <ligand>
        <name>FAD</name>
        <dbReference type="ChEBI" id="CHEBI:57692"/>
    </ligand>
</feature>
<feature type="binding site" evidence="1">
    <location>
        <position position="177"/>
    </location>
    <ligand>
        <name>FAD</name>
        <dbReference type="ChEBI" id="CHEBI:57692"/>
    </ligand>
</feature>
<feature type="binding site" evidence="1">
    <location>
        <begin position="269"/>
        <end position="283"/>
    </location>
    <ligand>
        <name>NAD(+)</name>
        <dbReference type="ChEBI" id="CHEBI:57540"/>
    </ligand>
</feature>
<feature type="binding site" evidence="1">
    <location>
        <position position="366"/>
    </location>
    <ligand>
        <name>FAD</name>
        <dbReference type="ChEBI" id="CHEBI:57692"/>
    </ligand>
</feature>